<accession>Q3Z489</accession>
<name>END8_SHISS</name>
<reference key="1">
    <citation type="journal article" date="2005" name="Nucleic Acids Res.">
        <title>Genome dynamics and diversity of Shigella species, the etiologic agents of bacillary dysentery.</title>
        <authorList>
            <person name="Yang F."/>
            <person name="Yang J."/>
            <person name="Zhang X."/>
            <person name="Chen L."/>
            <person name="Jiang Y."/>
            <person name="Yan Y."/>
            <person name="Tang X."/>
            <person name="Wang J."/>
            <person name="Xiong Z."/>
            <person name="Dong J."/>
            <person name="Xue Y."/>
            <person name="Zhu Y."/>
            <person name="Xu X."/>
            <person name="Sun L."/>
            <person name="Chen S."/>
            <person name="Nie H."/>
            <person name="Peng J."/>
            <person name="Xu J."/>
            <person name="Wang Y."/>
            <person name="Yuan Z."/>
            <person name="Wen Y."/>
            <person name="Yao Z."/>
            <person name="Shen Y."/>
            <person name="Qiang B."/>
            <person name="Hou Y."/>
            <person name="Yu J."/>
            <person name="Jin Q."/>
        </authorList>
    </citation>
    <scope>NUCLEOTIDE SEQUENCE [LARGE SCALE GENOMIC DNA]</scope>
    <source>
        <strain>Ss046</strain>
    </source>
</reference>
<proteinExistence type="inferred from homology"/>
<gene>
    <name evidence="1" type="primary">nei</name>
    <name type="ordered locus">SSON_0665</name>
</gene>
<protein>
    <recommendedName>
        <fullName evidence="1">Endonuclease 8</fullName>
    </recommendedName>
    <alternativeName>
        <fullName evidence="1">DNA glycosylase/AP lyase Nei</fullName>
        <ecNumber evidence="1">3.2.2.-</ecNumber>
        <ecNumber evidence="1">4.2.99.18</ecNumber>
    </alternativeName>
    <alternativeName>
        <fullName evidence="1">DNA-(apurinic or apyrimidinic site) lyase Nei</fullName>
    </alternativeName>
    <alternativeName>
        <fullName evidence="1">Endonuclease VIII</fullName>
    </alternativeName>
</protein>
<comment type="function">
    <text evidence="1">Involved in base excision repair of DNA damaged by oxidation or by mutagenic agents. Acts as a DNA glycosylase that recognizes and removes damaged bases. Has a preference for oxidized pyrimidines, such as thymine glycol, 5,6-dihydrouracil and 5,6-dihydrothymine. Has AP (apurinic/apyrimidinic) lyase activity and introduces nicks in the DNA strand. Cleaves the DNA backbone by beta-delta elimination to generate a single-strand break at the site of the removed base with both 3'- and 5'-phosphates.</text>
</comment>
<comment type="catalytic activity">
    <reaction evidence="1">
        <text>2'-deoxyribonucleotide-(2'-deoxyribose 5'-phosphate)-2'-deoxyribonucleotide-DNA = a 3'-end 2'-deoxyribonucleotide-(2,3-dehydro-2,3-deoxyribose 5'-phosphate)-DNA + a 5'-end 5'-phospho-2'-deoxyribonucleoside-DNA + H(+)</text>
        <dbReference type="Rhea" id="RHEA:66592"/>
        <dbReference type="Rhea" id="RHEA-COMP:13180"/>
        <dbReference type="Rhea" id="RHEA-COMP:16897"/>
        <dbReference type="Rhea" id="RHEA-COMP:17067"/>
        <dbReference type="ChEBI" id="CHEBI:15378"/>
        <dbReference type="ChEBI" id="CHEBI:136412"/>
        <dbReference type="ChEBI" id="CHEBI:157695"/>
        <dbReference type="ChEBI" id="CHEBI:167181"/>
        <dbReference type="EC" id="4.2.99.18"/>
    </reaction>
</comment>
<comment type="cofactor">
    <cofactor evidence="1">
        <name>Zn(2+)</name>
        <dbReference type="ChEBI" id="CHEBI:29105"/>
    </cofactor>
    <text evidence="1">Binds 1 zinc ion per subunit.</text>
</comment>
<comment type="similarity">
    <text evidence="1">Belongs to the FPG family.</text>
</comment>
<evidence type="ECO:0000255" key="1">
    <source>
        <dbReference type="HAMAP-Rule" id="MF_01253"/>
    </source>
</evidence>
<organism>
    <name type="scientific">Shigella sonnei (strain Ss046)</name>
    <dbReference type="NCBI Taxonomy" id="300269"/>
    <lineage>
        <taxon>Bacteria</taxon>
        <taxon>Pseudomonadati</taxon>
        <taxon>Pseudomonadota</taxon>
        <taxon>Gammaproteobacteria</taxon>
        <taxon>Enterobacterales</taxon>
        <taxon>Enterobacteriaceae</taxon>
        <taxon>Shigella</taxon>
    </lineage>
</organism>
<dbReference type="EC" id="3.2.2.-" evidence="1"/>
<dbReference type="EC" id="4.2.99.18" evidence="1"/>
<dbReference type="EMBL" id="CP000038">
    <property type="protein sequence ID" value="AAZ87423.1"/>
    <property type="molecule type" value="Genomic_DNA"/>
</dbReference>
<dbReference type="RefSeq" id="WP_001114020.1">
    <property type="nucleotide sequence ID" value="NC_007384.1"/>
</dbReference>
<dbReference type="SMR" id="Q3Z489"/>
<dbReference type="KEGG" id="ssn:SSON_0665"/>
<dbReference type="HOGENOM" id="CLU_038423_2_2_6"/>
<dbReference type="Proteomes" id="UP000002529">
    <property type="component" value="Chromosome"/>
</dbReference>
<dbReference type="GO" id="GO:0140078">
    <property type="term" value="F:class I DNA-(apurinic or apyrimidinic site) endonuclease activity"/>
    <property type="evidence" value="ECO:0007669"/>
    <property type="project" value="UniProtKB-EC"/>
</dbReference>
<dbReference type="GO" id="GO:0003684">
    <property type="term" value="F:damaged DNA binding"/>
    <property type="evidence" value="ECO:0007669"/>
    <property type="project" value="InterPro"/>
</dbReference>
<dbReference type="GO" id="GO:0000703">
    <property type="term" value="F:oxidized pyrimidine nucleobase lesion DNA N-glycosylase activity"/>
    <property type="evidence" value="ECO:0007669"/>
    <property type="project" value="UniProtKB-UniRule"/>
</dbReference>
<dbReference type="GO" id="GO:0008270">
    <property type="term" value="F:zinc ion binding"/>
    <property type="evidence" value="ECO:0007669"/>
    <property type="project" value="UniProtKB-UniRule"/>
</dbReference>
<dbReference type="GO" id="GO:0006284">
    <property type="term" value="P:base-excision repair"/>
    <property type="evidence" value="ECO:0007669"/>
    <property type="project" value="InterPro"/>
</dbReference>
<dbReference type="CDD" id="cd08965">
    <property type="entry name" value="EcNei-like_N"/>
    <property type="match status" value="1"/>
</dbReference>
<dbReference type="FunFam" id="1.10.8.50:FF:000005">
    <property type="entry name" value="Endonuclease 8"/>
    <property type="match status" value="1"/>
</dbReference>
<dbReference type="FunFam" id="3.20.190.10:FF:000002">
    <property type="entry name" value="Endonuclease 8"/>
    <property type="match status" value="1"/>
</dbReference>
<dbReference type="Gene3D" id="1.10.8.50">
    <property type="match status" value="1"/>
</dbReference>
<dbReference type="Gene3D" id="3.20.190.10">
    <property type="entry name" value="MutM-like, N-terminal"/>
    <property type="match status" value="1"/>
</dbReference>
<dbReference type="HAMAP" id="MF_01253">
    <property type="entry name" value="Endonuclease_8"/>
    <property type="match status" value="1"/>
</dbReference>
<dbReference type="InterPro" id="IPR015886">
    <property type="entry name" value="DNA_glyclase/AP_lyase_DNA-bd"/>
</dbReference>
<dbReference type="InterPro" id="IPR015887">
    <property type="entry name" value="DNA_glyclase_Znf_dom_DNA_BS"/>
</dbReference>
<dbReference type="InterPro" id="IPR044091">
    <property type="entry name" value="EcNei-like_N"/>
</dbReference>
<dbReference type="InterPro" id="IPR023713">
    <property type="entry name" value="Endonuclease-VIII"/>
</dbReference>
<dbReference type="InterPro" id="IPR012319">
    <property type="entry name" value="FPG_cat"/>
</dbReference>
<dbReference type="InterPro" id="IPR035937">
    <property type="entry name" value="MutM-like_N-ter"/>
</dbReference>
<dbReference type="InterPro" id="IPR010979">
    <property type="entry name" value="Ribosomal_uS13-like_H2TH"/>
</dbReference>
<dbReference type="InterPro" id="IPR000214">
    <property type="entry name" value="Znf_DNA_glyclase/AP_lyase"/>
</dbReference>
<dbReference type="InterPro" id="IPR010663">
    <property type="entry name" value="Znf_FPG/IleRS"/>
</dbReference>
<dbReference type="NCBIfam" id="NF007763">
    <property type="entry name" value="PRK10445.1"/>
    <property type="match status" value="1"/>
</dbReference>
<dbReference type="PANTHER" id="PTHR42697">
    <property type="entry name" value="ENDONUCLEASE 8"/>
    <property type="match status" value="1"/>
</dbReference>
<dbReference type="PANTHER" id="PTHR42697:SF1">
    <property type="entry name" value="ENDONUCLEASE 8"/>
    <property type="match status" value="1"/>
</dbReference>
<dbReference type="Pfam" id="PF01149">
    <property type="entry name" value="Fapy_DNA_glyco"/>
    <property type="match status" value="1"/>
</dbReference>
<dbReference type="Pfam" id="PF06831">
    <property type="entry name" value="H2TH"/>
    <property type="match status" value="1"/>
</dbReference>
<dbReference type="Pfam" id="PF06827">
    <property type="entry name" value="zf-FPG_IleRS"/>
    <property type="match status" value="1"/>
</dbReference>
<dbReference type="SMART" id="SM00898">
    <property type="entry name" value="Fapy_DNA_glyco"/>
    <property type="match status" value="1"/>
</dbReference>
<dbReference type="SMART" id="SM01232">
    <property type="entry name" value="H2TH"/>
    <property type="match status" value="1"/>
</dbReference>
<dbReference type="SUPFAM" id="SSF57716">
    <property type="entry name" value="Glucocorticoid receptor-like (DNA-binding domain)"/>
    <property type="match status" value="1"/>
</dbReference>
<dbReference type="SUPFAM" id="SSF81624">
    <property type="entry name" value="N-terminal domain of MutM-like DNA repair proteins"/>
    <property type="match status" value="1"/>
</dbReference>
<dbReference type="SUPFAM" id="SSF46946">
    <property type="entry name" value="S13-like H2TH domain"/>
    <property type="match status" value="1"/>
</dbReference>
<dbReference type="PROSITE" id="PS51068">
    <property type="entry name" value="FPG_CAT"/>
    <property type="match status" value="1"/>
</dbReference>
<dbReference type="PROSITE" id="PS01242">
    <property type="entry name" value="ZF_FPG_1"/>
    <property type="match status" value="1"/>
</dbReference>
<dbReference type="PROSITE" id="PS51066">
    <property type="entry name" value="ZF_FPG_2"/>
    <property type="match status" value="1"/>
</dbReference>
<keyword id="KW-0227">DNA damage</keyword>
<keyword id="KW-0234">DNA repair</keyword>
<keyword id="KW-0238">DNA-binding</keyword>
<keyword id="KW-0326">Glycosidase</keyword>
<keyword id="KW-0378">Hydrolase</keyword>
<keyword id="KW-0456">Lyase</keyword>
<keyword id="KW-0479">Metal-binding</keyword>
<keyword id="KW-0511">Multifunctional enzyme</keyword>
<keyword id="KW-1185">Reference proteome</keyword>
<keyword id="KW-0862">Zinc</keyword>
<keyword id="KW-0863">Zinc-finger</keyword>
<feature type="initiator methionine" description="Removed" evidence="1">
    <location>
        <position position="1"/>
    </location>
</feature>
<feature type="chain" id="PRO_1000067212" description="Endonuclease 8">
    <location>
        <begin position="2"/>
        <end position="263"/>
    </location>
</feature>
<feature type="zinc finger region" description="FPG-type" evidence="1">
    <location>
        <begin position="229"/>
        <end position="263"/>
    </location>
</feature>
<feature type="active site" description="Schiff-base intermediate with DNA" evidence="1">
    <location>
        <position position="2"/>
    </location>
</feature>
<feature type="active site" description="Proton donor" evidence="1">
    <location>
        <position position="3"/>
    </location>
</feature>
<feature type="active site" description="Proton donor; for beta-elimination activity" evidence="1">
    <location>
        <position position="53"/>
    </location>
</feature>
<feature type="active site" description="Proton donor; for delta-elimination activity" evidence="1">
    <location>
        <position position="253"/>
    </location>
</feature>
<feature type="binding site" evidence="1">
    <location>
        <position position="70"/>
    </location>
    <ligand>
        <name>DNA</name>
        <dbReference type="ChEBI" id="CHEBI:16991"/>
    </ligand>
</feature>
<feature type="binding site" evidence="1">
    <location>
        <position position="125"/>
    </location>
    <ligand>
        <name>DNA</name>
        <dbReference type="ChEBI" id="CHEBI:16991"/>
    </ligand>
</feature>
<feature type="binding site" evidence="1">
    <location>
        <position position="169"/>
    </location>
    <ligand>
        <name>DNA</name>
        <dbReference type="ChEBI" id="CHEBI:16991"/>
    </ligand>
</feature>
<sequence length="263" mass="29875">MPEGPEIRRAADNLEAAIKGKPLTDVWFAFPQLKTYQSQLIGQHVTHVETRGKALLTHFSNDLTLYSHNQLYGVWRVVDTGEEPQTTRVLRVKLQTADKTILLYSASDIEMLRPEQLTTHPFLQRVGPDVLDPNLTPEVVKERLLSPRFRNRQFAGLLLDQAFLAGLGNYLRVEILWQVGLTGNHKAKDLNAAQLDALAHALLDIPRFSYATRGLVDENKHHGALFRFKVFHRDGEPCERCGSIIEKTTLSSRPFYWCPGCQH</sequence>